<name>Y2346_EXIS2</name>
<sequence length="212" mass="24150">MTVRFMDVFTEWASTYDDTVTGHDPEYKEVFRRYEEILDTVATKAISPVVEFGAGTGNLTQRLLDRHQDVLAVEPSPEMREILIDKIPTLPVQDGHFLSFTADHAKSFVSTYAFHHLTDEEKGEAVDLMAQILPQDGKIVYADTMFVSEEARLQTIAEAKAQGFNGLAEDLEREFYPLIPVMEQIFASRGFDVTFTQYNHFVWLVEAEKMGE</sequence>
<accession>B1YKZ4</accession>
<dbReference type="EC" id="2.1.1.-" evidence="1"/>
<dbReference type="EMBL" id="CP001022">
    <property type="protein sequence ID" value="ACB61796.1"/>
    <property type="molecule type" value="Genomic_DNA"/>
</dbReference>
<dbReference type="RefSeq" id="WP_012371212.1">
    <property type="nucleotide sequence ID" value="NC_010556.1"/>
</dbReference>
<dbReference type="SMR" id="B1YKZ4"/>
<dbReference type="STRING" id="262543.Exig_2346"/>
<dbReference type="KEGG" id="esi:Exig_2346"/>
<dbReference type="eggNOG" id="COG0030">
    <property type="taxonomic scope" value="Bacteria"/>
</dbReference>
<dbReference type="HOGENOM" id="CLU_111961_0_0_9"/>
<dbReference type="OrthoDB" id="465705at2"/>
<dbReference type="Proteomes" id="UP000001681">
    <property type="component" value="Chromosome"/>
</dbReference>
<dbReference type="GO" id="GO:0008757">
    <property type="term" value="F:S-adenosylmethionine-dependent methyltransferase activity"/>
    <property type="evidence" value="ECO:0007669"/>
    <property type="project" value="UniProtKB-UniRule"/>
</dbReference>
<dbReference type="GO" id="GO:0032259">
    <property type="term" value="P:methylation"/>
    <property type="evidence" value="ECO:0007669"/>
    <property type="project" value="UniProtKB-KW"/>
</dbReference>
<dbReference type="CDD" id="cd02440">
    <property type="entry name" value="AdoMet_MTases"/>
    <property type="match status" value="1"/>
</dbReference>
<dbReference type="Gene3D" id="3.40.50.150">
    <property type="entry name" value="Vaccinia Virus protein VP39"/>
    <property type="match status" value="1"/>
</dbReference>
<dbReference type="HAMAP" id="MF_02100">
    <property type="entry name" value="Methyltr_YrrT"/>
    <property type="match status" value="1"/>
</dbReference>
<dbReference type="InterPro" id="IPR041698">
    <property type="entry name" value="Methyltransf_25"/>
</dbReference>
<dbReference type="InterPro" id="IPR029063">
    <property type="entry name" value="SAM-dependent_MTases_sf"/>
</dbReference>
<dbReference type="InterPro" id="IPR023553">
    <property type="entry name" value="Uncharacterised_MeTfrase_YrrT"/>
</dbReference>
<dbReference type="Pfam" id="PF13649">
    <property type="entry name" value="Methyltransf_25"/>
    <property type="match status" value="1"/>
</dbReference>
<dbReference type="SUPFAM" id="SSF53335">
    <property type="entry name" value="S-adenosyl-L-methionine-dependent methyltransferases"/>
    <property type="match status" value="1"/>
</dbReference>
<keyword id="KW-0489">Methyltransferase</keyword>
<keyword id="KW-1185">Reference proteome</keyword>
<keyword id="KW-0949">S-adenosyl-L-methionine</keyword>
<keyword id="KW-0808">Transferase</keyword>
<protein>
    <recommendedName>
        <fullName evidence="1">Uncharacterized methyltransferase Exig_2346</fullName>
        <ecNumber evidence="1">2.1.1.-</ecNumber>
    </recommendedName>
</protein>
<evidence type="ECO:0000255" key="1">
    <source>
        <dbReference type="HAMAP-Rule" id="MF_02100"/>
    </source>
</evidence>
<organism>
    <name type="scientific">Exiguobacterium sibiricum (strain DSM 17290 / CCUG 55495 / CIP 109462 / JCM 13490 / 255-15)</name>
    <dbReference type="NCBI Taxonomy" id="262543"/>
    <lineage>
        <taxon>Bacteria</taxon>
        <taxon>Bacillati</taxon>
        <taxon>Bacillota</taxon>
        <taxon>Bacilli</taxon>
        <taxon>Bacillales</taxon>
        <taxon>Bacillales Family XII. Incertae Sedis</taxon>
        <taxon>Exiguobacterium</taxon>
    </lineage>
</organism>
<gene>
    <name type="ordered locus">Exig_2346</name>
</gene>
<proteinExistence type="inferred from homology"/>
<feature type="chain" id="PRO_0000373852" description="Uncharacterized methyltransferase Exig_2346">
    <location>
        <begin position="1"/>
        <end position="212"/>
    </location>
</feature>
<feature type="binding site" evidence="1">
    <location>
        <position position="53"/>
    </location>
    <ligand>
        <name>S-adenosyl-L-methionine</name>
        <dbReference type="ChEBI" id="CHEBI:59789"/>
    </ligand>
</feature>
<feature type="binding site" evidence="1">
    <location>
        <position position="74"/>
    </location>
    <ligand>
        <name>S-adenosyl-L-methionine</name>
        <dbReference type="ChEBI" id="CHEBI:59789"/>
    </ligand>
</feature>
<comment type="function">
    <text evidence="1">Could be a S-adenosyl-L-methionine-dependent methyltransferase.</text>
</comment>
<comment type="similarity">
    <text evidence="1">Belongs to the methyltransferase superfamily. YrrT family.</text>
</comment>
<reference key="1">
    <citation type="submission" date="2008-04" db="EMBL/GenBank/DDBJ databases">
        <title>Complete sequence of chromosome of Exiguobacterium sibiricum 255-15.</title>
        <authorList>
            <consortium name="US DOE Joint Genome Institute"/>
            <person name="Copeland A."/>
            <person name="Lucas S."/>
            <person name="Lapidus A."/>
            <person name="Glavina del Rio T."/>
            <person name="Dalin E."/>
            <person name="Tice H."/>
            <person name="Bruce D."/>
            <person name="Goodwin L."/>
            <person name="Pitluck S."/>
            <person name="Kiss H."/>
            <person name="Chertkov O."/>
            <person name="Monk C."/>
            <person name="Brettin T."/>
            <person name="Detter J.C."/>
            <person name="Han C."/>
            <person name="Kuske C.R."/>
            <person name="Schmutz J."/>
            <person name="Larimer F."/>
            <person name="Land M."/>
            <person name="Hauser L."/>
            <person name="Kyrpides N."/>
            <person name="Mikhailova N."/>
            <person name="Vishnivetskaya T."/>
            <person name="Rodrigues D.F."/>
            <person name="Gilichinsky D."/>
            <person name="Tiedje J."/>
            <person name="Richardson P."/>
        </authorList>
    </citation>
    <scope>NUCLEOTIDE SEQUENCE [LARGE SCALE GENOMIC DNA]</scope>
    <source>
        <strain>DSM 17290 / CCUG 55495 / CIP 109462 / JCM 13490 / 255-15</strain>
    </source>
</reference>